<protein>
    <recommendedName>
        <fullName>Uncharacterized protein MJ1416</fullName>
    </recommendedName>
</protein>
<keyword id="KW-1185">Reference proteome</keyword>
<evidence type="ECO:0000305" key="1"/>
<dbReference type="EMBL" id="L77117">
    <property type="protein sequence ID" value="AAB99426.1"/>
    <property type="molecule type" value="Genomic_DNA"/>
</dbReference>
<dbReference type="PIR" id="G64476">
    <property type="entry name" value="G64476"/>
</dbReference>
<dbReference type="SMR" id="Q58811"/>
<dbReference type="FunCoup" id="Q58811">
    <property type="interactions" value="1"/>
</dbReference>
<dbReference type="STRING" id="243232.MJ_1416"/>
<dbReference type="PaxDb" id="243232-MJ_1416"/>
<dbReference type="DNASU" id="1452319"/>
<dbReference type="EnsemblBacteria" id="AAB99426">
    <property type="protein sequence ID" value="AAB99426"/>
    <property type="gene ID" value="MJ_1416"/>
</dbReference>
<dbReference type="KEGG" id="mja:MJ_1416"/>
<dbReference type="eggNOG" id="arCOG00637">
    <property type="taxonomic scope" value="Archaea"/>
</dbReference>
<dbReference type="HOGENOM" id="CLU_648312_0_0_2"/>
<dbReference type="InParanoid" id="Q58811"/>
<dbReference type="PhylomeDB" id="Q58811"/>
<dbReference type="Proteomes" id="UP000000805">
    <property type="component" value="Chromosome"/>
</dbReference>
<dbReference type="GO" id="GO:0009030">
    <property type="term" value="F:thiamine-phosphate kinase activity"/>
    <property type="evidence" value="ECO:0007669"/>
    <property type="project" value="InterPro"/>
</dbReference>
<dbReference type="GO" id="GO:0009228">
    <property type="term" value="P:thiamine biosynthetic process"/>
    <property type="evidence" value="ECO:0007669"/>
    <property type="project" value="InterPro"/>
</dbReference>
<dbReference type="CDD" id="cd02691">
    <property type="entry name" value="PurM-like2"/>
    <property type="match status" value="1"/>
</dbReference>
<dbReference type="Gene3D" id="3.90.650.10">
    <property type="entry name" value="PurM-like C-terminal domain"/>
    <property type="match status" value="1"/>
</dbReference>
<dbReference type="Gene3D" id="3.30.1330.10">
    <property type="entry name" value="PurM-like, N-terminal domain"/>
    <property type="match status" value="1"/>
</dbReference>
<dbReference type="InterPro" id="IPR009186">
    <property type="entry name" value="Ni_metllenz_mat"/>
</dbReference>
<dbReference type="InterPro" id="IPR010918">
    <property type="entry name" value="PurM-like_C_dom"/>
</dbReference>
<dbReference type="InterPro" id="IPR036676">
    <property type="entry name" value="PurM-like_C_sf"/>
</dbReference>
<dbReference type="InterPro" id="IPR016188">
    <property type="entry name" value="PurM-like_N"/>
</dbReference>
<dbReference type="InterPro" id="IPR036921">
    <property type="entry name" value="PurM-like_N_sf"/>
</dbReference>
<dbReference type="InterPro" id="IPR006283">
    <property type="entry name" value="ThiL-like"/>
</dbReference>
<dbReference type="PANTHER" id="PTHR30270:SF2">
    <property type="entry name" value="HYDROGENASE EXPRESSION_FORMATION PROTEIN"/>
    <property type="match status" value="1"/>
</dbReference>
<dbReference type="PANTHER" id="PTHR30270">
    <property type="entry name" value="THIAMINE-MONOPHOSPHATE KINASE"/>
    <property type="match status" value="1"/>
</dbReference>
<dbReference type="Pfam" id="PF00586">
    <property type="entry name" value="AIRS"/>
    <property type="match status" value="1"/>
</dbReference>
<dbReference type="Pfam" id="PF02769">
    <property type="entry name" value="AIRS_C"/>
    <property type="match status" value="1"/>
</dbReference>
<dbReference type="PIRSF" id="PIRSF006346">
    <property type="entry name" value="Ni_metllenz_mat"/>
    <property type="match status" value="1"/>
</dbReference>
<dbReference type="SUPFAM" id="SSF56042">
    <property type="entry name" value="PurM C-terminal domain-like"/>
    <property type="match status" value="1"/>
</dbReference>
<dbReference type="SUPFAM" id="SSF55326">
    <property type="entry name" value="PurM N-terminal domain-like"/>
    <property type="match status" value="1"/>
</dbReference>
<sequence length="452" mass="50076">MMDLEGYVRRCLRKKIPENKIIEDGFKRILEIKEDVDEEFAKKFIKAILEEVKTTEKFREIDDENLKTLLKYPKSGVTMGRMGVGSRGEGDFFVHREIARIVKSTKVKAYVSAEEQDDAGIVRADAKYIVAAIDGTHSRLSDFPFLGGFHVTRAALRDIYVMGAEAVALISDVHLADDGDVGKIFDFTAGICAVSEAVNVPLIGGSTLRVGGDMVIGDRLVSAVGAIGVIKEGEPTARRNAEVGDVILMTEGSGGGTITTTALYYGWFDVIYETLNVDFIKACQNLIRSGLIKKIHAMTDVTNGGLRGDAYEISKTAKVSLIFDKEKVYKTINPKVLEMLEVLNIDPLGVSTDSLMIICPEEYADDIKKVTGAIEVGYVEEGEESYLVDGNKKIPLKPMFRESAYTPVKKVVGERKPGDFEEMKEKVRRACDEAIKKKDFVVELLKERKKKF</sequence>
<organism>
    <name type="scientific">Methanocaldococcus jannaschii (strain ATCC 43067 / DSM 2661 / JAL-1 / JCM 10045 / NBRC 100440)</name>
    <name type="common">Methanococcus jannaschii</name>
    <dbReference type="NCBI Taxonomy" id="243232"/>
    <lineage>
        <taxon>Archaea</taxon>
        <taxon>Methanobacteriati</taxon>
        <taxon>Methanobacteriota</taxon>
        <taxon>Methanomada group</taxon>
        <taxon>Methanococci</taxon>
        <taxon>Methanococcales</taxon>
        <taxon>Methanocaldococcaceae</taxon>
        <taxon>Methanocaldococcus</taxon>
    </lineage>
</organism>
<gene>
    <name type="ordered locus">MJ1416</name>
</gene>
<accession>Q58811</accession>
<name>Y1416_METJA</name>
<reference key="1">
    <citation type="journal article" date="1996" name="Science">
        <title>Complete genome sequence of the methanogenic archaeon, Methanococcus jannaschii.</title>
        <authorList>
            <person name="Bult C.J."/>
            <person name="White O."/>
            <person name="Olsen G.J."/>
            <person name="Zhou L."/>
            <person name="Fleischmann R.D."/>
            <person name="Sutton G.G."/>
            <person name="Blake J.A."/>
            <person name="FitzGerald L.M."/>
            <person name="Clayton R.A."/>
            <person name="Gocayne J.D."/>
            <person name="Kerlavage A.R."/>
            <person name="Dougherty B.A."/>
            <person name="Tomb J.-F."/>
            <person name="Adams M.D."/>
            <person name="Reich C.I."/>
            <person name="Overbeek R."/>
            <person name="Kirkness E.F."/>
            <person name="Weinstock K.G."/>
            <person name="Merrick J.M."/>
            <person name="Glodek A."/>
            <person name="Scott J.L."/>
            <person name="Geoghagen N.S.M."/>
            <person name="Weidman J.F."/>
            <person name="Fuhrmann J.L."/>
            <person name="Nguyen D."/>
            <person name="Utterback T.R."/>
            <person name="Kelley J.M."/>
            <person name="Peterson J.D."/>
            <person name="Sadow P.W."/>
            <person name="Hanna M.C."/>
            <person name="Cotton M.D."/>
            <person name="Roberts K.M."/>
            <person name="Hurst M.A."/>
            <person name="Kaine B.P."/>
            <person name="Borodovsky M."/>
            <person name="Klenk H.-P."/>
            <person name="Fraser C.M."/>
            <person name="Smith H.O."/>
            <person name="Woese C.R."/>
            <person name="Venter J.C."/>
        </authorList>
    </citation>
    <scope>NUCLEOTIDE SEQUENCE [LARGE SCALE GENOMIC DNA]</scope>
    <source>
        <strain>ATCC 43067 / DSM 2661 / JAL-1 / JCM 10045 / NBRC 100440</strain>
    </source>
</reference>
<feature type="chain" id="PRO_0000201463" description="Uncharacterized protein MJ1416">
    <location>
        <begin position="1"/>
        <end position="452"/>
    </location>
</feature>
<proteinExistence type="inferred from homology"/>
<comment type="similarity">
    <text evidence="1">Belongs to the HypE family.</text>
</comment>